<organism>
    <name type="scientific">Chelativorans sp. (strain BNC1)</name>
    <dbReference type="NCBI Taxonomy" id="266779"/>
    <lineage>
        <taxon>Bacteria</taxon>
        <taxon>Pseudomonadati</taxon>
        <taxon>Pseudomonadota</taxon>
        <taxon>Alphaproteobacteria</taxon>
        <taxon>Hyphomicrobiales</taxon>
        <taxon>Phyllobacteriaceae</taxon>
        <taxon>Chelativorans</taxon>
    </lineage>
</organism>
<name>TRPB_CHESB</name>
<dbReference type="EC" id="4.2.1.20" evidence="1"/>
<dbReference type="EMBL" id="CP000390">
    <property type="protein sequence ID" value="ABG62066.1"/>
    <property type="molecule type" value="Genomic_DNA"/>
</dbReference>
<dbReference type="SMR" id="Q11KK9"/>
<dbReference type="STRING" id="266779.Meso_0666"/>
<dbReference type="KEGG" id="mes:Meso_0666"/>
<dbReference type="eggNOG" id="COG0133">
    <property type="taxonomic scope" value="Bacteria"/>
</dbReference>
<dbReference type="HOGENOM" id="CLU_016734_3_1_5"/>
<dbReference type="OrthoDB" id="9766131at2"/>
<dbReference type="UniPathway" id="UPA00035">
    <property type="reaction ID" value="UER00044"/>
</dbReference>
<dbReference type="GO" id="GO:0005737">
    <property type="term" value="C:cytoplasm"/>
    <property type="evidence" value="ECO:0007669"/>
    <property type="project" value="TreeGrafter"/>
</dbReference>
<dbReference type="GO" id="GO:0004834">
    <property type="term" value="F:tryptophan synthase activity"/>
    <property type="evidence" value="ECO:0007669"/>
    <property type="project" value="UniProtKB-UniRule"/>
</dbReference>
<dbReference type="CDD" id="cd06446">
    <property type="entry name" value="Trp-synth_B"/>
    <property type="match status" value="1"/>
</dbReference>
<dbReference type="FunFam" id="3.40.50.1100:FF:000001">
    <property type="entry name" value="Tryptophan synthase beta chain"/>
    <property type="match status" value="1"/>
</dbReference>
<dbReference type="FunFam" id="3.40.50.1100:FF:000004">
    <property type="entry name" value="Tryptophan synthase beta chain"/>
    <property type="match status" value="1"/>
</dbReference>
<dbReference type="Gene3D" id="3.40.50.1100">
    <property type="match status" value="2"/>
</dbReference>
<dbReference type="HAMAP" id="MF_00133">
    <property type="entry name" value="Trp_synth_beta"/>
    <property type="match status" value="1"/>
</dbReference>
<dbReference type="InterPro" id="IPR006653">
    <property type="entry name" value="Trp_synth_b_CS"/>
</dbReference>
<dbReference type="InterPro" id="IPR006654">
    <property type="entry name" value="Trp_synth_beta"/>
</dbReference>
<dbReference type="InterPro" id="IPR023026">
    <property type="entry name" value="Trp_synth_beta/beta-like"/>
</dbReference>
<dbReference type="InterPro" id="IPR001926">
    <property type="entry name" value="TrpB-like_PALP"/>
</dbReference>
<dbReference type="InterPro" id="IPR036052">
    <property type="entry name" value="TrpB-like_PALP_sf"/>
</dbReference>
<dbReference type="NCBIfam" id="TIGR00263">
    <property type="entry name" value="trpB"/>
    <property type="match status" value="1"/>
</dbReference>
<dbReference type="PANTHER" id="PTHR48077:SF3">
    <property type="entry name" value="TRYPTOPHAN SYNTHASE"/>
    <property type="match status" value="1"/>
</dbReference>
<dbReference type="PANTHER" id="PTHR48077">
    <property type="entry name" value="TRYPTOPHAN SYNTHASE-RELATED"/>
    <property type="match status" value="1"/>
</dbReference>
<dbReference type="Pfam" id="PF00291">
    <property type="entry name" value="PALP"/>
    <property type="match status" value="1"/>
</dbReference>
<dbReference type="PIRSF" id="PIRSF001413">
    <property type="entry name" value="Trp_syn_beta"/>
    <property type="match status" value="1"/>
</dbReference>
<dbReference type="SUPFAM" id="SSF53686">
    <property type="entry name" value="Tryptophan synthase beta subunit-like PLP-dependent enzymes"/>
    <property type="match status" value="1"/>
</dbReference>
<dbReference type="PROSITE" id="PS00168">
    <property type="entry name" value="TRP_SYNTHASE_BETA"/>
    <property type="match status" value="1"/>
</dbReference>
<evidence type="ECO:0000255" key="1">
    <source>
        <dbReference type="HAMAP-Rule" id="MF_00133"/>
    </source>
</evidence>
<proteinExistence type="inferred from homology"/>
<feature type="chain" id="PRO_1000018356" description="Tryptophan synthase beta chain">
    <location>
        <begin position="1"/>
        <end position="406"/>
    </location>
</feature>
<feature type="modified residue" description="N6-(pyridoxal phosphate)lysine" evidence="1">
    <location>
        <position position="99"/>
    </location>
</feature>
<comment type="function">
    <text evidence="1">The beta subunit is responsible for the synthesis of L-tryptophan from indole and L-serine.</text>
</comment>
<comment type="catalytic activity">
    <reaction evidence="1">
        <text>(1S,2R)-1-C-(indol-3-yl)glycerol 3-phosphate + L-serine = D-glyceraldehyde 3-phosphate + L-tryptophan + H2O</text>
        <dbReference type="Rhea" id="RHEA:10532"/>
        <dbReference type="ChEBI" id="CHEBI:15377"/>
        <dbReference type="ChEBI" id="CHEBI:33384"/>
        <dbReference type="ChEBI" id="CHEBI:57912"/>
        <dbReference type="ChEBI" id="CHEBI:58866"/>
        <dbReference type="ChEBI" id="CHEBI:59776"/>
        <dbReference type="EC" id="4.2.1.20"/>
    </reaction>
</comment>
<comment type="cofactor">
    <cofactor evidence="1">
        <name>pyridoxal 5'-phosphate</name>
        <dbReference type="ChEBI" id="CHEBI:597326"/>
    </cofactor>
</comment>
<comment type="pathway">
    <text evidence="1">Amino-acid biosynthesis; L-tryptophan biosynthesis; L-tryptophan from chorismate: step 5/5.</text>
</comment>
<comment type="subunit">
    <text evidence="1">Tetramer of two alpha and two beta chains.</text>
</comment>
<comment type="similarity">
    <text evidence="1">Belongs to the TrpB family.</text>
</comment>
<accession>Q11KK9</accession>
<sequence>MNKPVEPNSFRTGPDEQGMFGIFGGRFVAETLMPLILELEEHWNAAKNDPAFKAELQQLGAHYTGRPSPLYFAERLTEHLGGAKVYFKREELNHTGSHKVNNCLGQILLAKRMGKTRIIAETGAGQHGVASATVAARFGLPCVVYMGATDVERQAPNVFRMRLLGAEVKPVTSGHGTLKDAMNEALRDWVTNVEDTYYLIGTAAGPHPYPELVRDFQSVIGQETKEQILAAEGRLPDMLVAAVGGGSNAIGLFHPFLDDKGVAMVGVEAGGKGLEGDEHCASLTAGSPGVLHGNRTYLLQDSDGQIKEGHSISAGLDYPGIGPEHSWLKEAGRVEYVPIMDHEALEAFQLLTRLEGIIPALEPSHALAEVIKRAPKMGKDQIIVMNLSGRGDKDIFAVAKHLKMDV</sequence>
<protein>
    <recommendedName>
        <fullName evidence="1">Tryptophan synthase beta chain</fullName>
        <ecNumber evidence="1">4.2.1.20</ecNumber>
    </recommendedName>
</protein>
<keyword id="KW-0028">Amino-acid biosynthesis</keyword>
<keyword id="KW-0057">Aromatic amino acid biosynthesis</keyword>
<keyword id="KW-0456">Lyase</keyword>
<keyword id="KW-0663">Pyridoxal phosphate</keyword>
<keyword id="KW-0822">Tryptophan biosynthesis</keyword>
<reference key="1">
    <citation type="submission" date="2006-06" db="EMBL/GenBank/DDBJ databases">
        <title>Complete sequence of chromosome of Mesorhizobium sp. BNC1.</title>
        <authorList>
            <consortium name="US DOE Joint Genome Institute"/>
            <person name="Copeland A."/>
            <person name="Lucas S."/>
            <person name="Lapidus A."/>
            <person name="Barry K."/>
            <person name="Detter J.C."/>
            <person name="Glavina del Rio T."/>
            <person name="Hammon N."/>
            <person name="Israni S."/>
            <person name="Dalin E."/>
            <person name="Tice H."/>
            <person name="Pitluck S."/>
            <person name="Chertkov O."/>
            <person name="Brettin T."/>
            <person name="Bruce D."/>
            <person name="Han C."/>
            <person name="Tapia R."/>
            <person name="Gilna P."/>
            <person name="Schmutz J."/>
            <person name="Larimer F."/>
            <person name="Land M."/>
            <person name="Hauser L."/>
            <person name="Kyrpides N."/>
            <person name="Mikhailova N."/>
            <person name="Richardson P."/>
        </authorList>
    </citation>
    <scope>NUCLEOTIDE SEQUENCE [LARGE SCALE GENOMIC DNA]</scope>
    <source>
        <strain>BNC1</strain>
    </source>
</reference>
<gene>
    <name evidence="1" type="primary">trpB</name>
    <name type="ordered locus">Meso_0666</name>
</gene>